<protein>
    <recommendedName>
        <fullName>Zinc finger and BTB domain-containing protein 43</fullName>
    </recommendedName>
    <alternativeName>
        <fullName>Zinc finger and BTB domain-containing protein 22B</fullName>
    </alternativeName>
    <alternativeName>
        <fullName>Zinc finger protein 297B</fullName>
    </alternativeName>
    <alternativeName>
        <fullName>ZnF-x</fullName>
    </alternativeName>
</protein>
<accession>O43298</accession>
<accession>Q5JU96</accession>
<organism>
    <name type="scientific">Homo sapiens</name>
    <name type="common">Human</name>
    <dbReference type="NCBI Taxonomy" id="9606"/>
    <lineage>
        <taxon>Eukaryota</taxon>
        <taxon>Metazoa</taxon>
        <taxon>Chordata</taxon>
        <taxon>Craniata</taxon>
        <taxon>Vertebrata</taxon>
        <taxon>Euteleostomi</taxon>
        <taxon>Mammalia</taxon>
        <taxon>Eutheria</taxon>
        <taxon>Euarchontoglires</taxon>
        <taxon>Primates</taxon>
        <taxon>Haplorrhini</taxon>
        <taxon>Catarrhini</taxon>
        <taxon>Hominidae</taxon>
        <taxon>Homo</taxon>
    </lineage>
</organism>
<gene>
    <name type="primary">ZBTB43</name>
    <name type="synonym">KIAA0414</name>
    <name type="synonym">ZBTB22B</name>
    <name type="synonym">ZNF297B</name>
</gene>
<proteinExistence type="evidence at protein level"/>
<sequence length="467" mass="52630">MEPGTNSFRVEFPDFSSTILQKLNQQRQQGQLCDVSIVVQGHIFRAHKAVLAASSPYFCDQVLLKNSRRIVLPDVMNPRVFENILLSSYTGRLVMPAPEIVSYLTAASFLQMWHVVDKCTEVLEGNPTVLCQKLNHGSDHQSPSSSSYNGLVESFELGSGGHTDFPKAQELRDGENEEESTKDELSSQLTEHEYLPSNSSTEHDRLSTEMASQDGEEGASDSAEFHYTRPMYSKPSIMAHKRWIHVKPERLEQACEGMDVHATYDEHQVTESINTVQTEHTVQPSGVEEDFHIGEKKVEAEFDEQADESNYDEQVDFYGSSMEEFSGERSDGNLIGHRQEAALAAGYSENIEMVTGIKEEASHLGFSATDKLYPCQCGKSFTHKSQRDRHMSMHLGLRPYGCGVCGKKFKMKHHLVGHMKIHTGIKPYECNICAKRFMWRDSFHRHVTSCTKSYEAAKAEQNTTEAN</sequence>
<reference key="1">
    <citation type="journal article" date="1997" name="DNA Res.">
        <title>Prediction of the coding sequences of unidentified human genes. VIII. 78 new cDNA clones from brain which code for large proteins in vitro.</title>
        <authorList>
            <person name="Ishikawa K."/>
            <person name="Nagase T."/>
            <person name="Nakajima D."/>
            <person name="Seki N."/>
            <person name="Ohira M."/>
            <person name="Miyajima N."/>
            <person name="Tanaka A."/>
            <person name="Kotani H."/>
            <person name="Nomura N."/>
            <person name="Ohara O."/>
        </authorList>
    </citation>
    <scope>NUCLEOTIDE SEQUENCE [LARGE SCALE MRNA]</scope>
    <source>
        <tissue>Brain</tissue>
    </source>
</reference>
<reference key="2">
    <citation type="submission" date="1998-02" db="EMBL/GenBank/DDBJ databases">
        <authorList>
            <person name="Zhang X."/>
            <person name="Liu C.-X."/>
            <person name="Lisitsina M.N."/>
            <person name="Musco S."/>
            <person name="Lisitsyn N.A."/>
        </authorList>
    </citation>
    <scope>NUCLEOTIDE SEQUENCE [MRNA]</scope>
</reference>
<reference key="3">
    <citation type="submission" date="2003-05" db="EMBL/GenBank/DDBJ databases">
        <title>Cloning of human full-length CDSs in BD Creator(TM) system donor vector.</title>
        <authorList>
            <person name="Kalnine N."/>
            <person name="Chen X."/>
            <person name="Rolfs A."/>
            <person name="Halleck A."/>
            <person name="Hines L."/>
            <person name="Eisenstein S."/>
            <person name="Koundinya M."/>
            <person name="Raphael J."/>
            <person name="Moreira D."/>
            <person name="Kelley T."/>
            <person name="LaBaer J."/>
            <person name="Lin Y."/>
            <person name="Phelan M."/>
            <person name="Farmer A."/>
        </authorList>
    </citation>
    <scope>NUCLEOTIDE SEQUENCE [LARGE SCALE MRNA]</scope>
</reference>
<reference key="4">
    <citation type="journal article" date="2004" name="Nature">
        <title>DNA sequence and analysis of human chromosome 9.</title>
        <authorList>
            <person name="Humphray S.J."/>
            <person name="Oliver K."/>
            <person name="Hunt A.R."/>
            <person name="Plumb R.W."/>
            <person name="Loveland J.E."/>
            <person name="Howe K.L."/>
            <person name="Andrews T.D."/>
            <person name="Searle S."/>
            <person name="Hunt S.E."/>
            <person name="Scott C.E."/>
            <person name="Jones M.C."/>
            <person name="Ainscough R."/>
            <person name="Almeida J.P."/>
            <person name="Ambrose K.D."/>
            <person name="Ashwell R.I.S."/>
            <person name="Babbage A.K."/>
            <person name="Babbage S."/>
            <person name="Bagguley C.L."/>
            <person name="Bailey J."/>
            <person name="Banerjee R."/>
            <person name="Barker D.J."/>
            <person name="Barlow K.F."/>
            <person name="Bates K."/>
            <person name="Beasley H."/>
            <person name="Beasley O."/>
            <person name="Bird C.P."/>
            <person name="Bray-Allen S."/>
            <person name="Brown A.J."/>
            <person name="Brown J.Y."/>
            <person name="Burford D."/>
            <person name="Burrill W."/>
            <person name="Burton J."/>
            <person name="Carder C."/>
            <person name="Carter N.P."/>
            <person name="Chapman J.C."/>
            <person name="Chen Y."/>
            <person name="Clarke G."/>
            <person name="Clark S.Y."/>
            <person name="Clee C.M."/>
            <person name="Clegg S."/>
            <person name="Collier R.E."/>
            <person name="Corby N."/>
            <person name="Crosier M."/>
            <person name="Cummings A.T."/>
            <person name="Davies J."/>
            <person name="Dhami P."/>
            <person name="Dunn M."/>
            <person name="Dutta I."/>
            <person name="Dyer L.W."/>
            <person name="Earthrowl M.E."/>
            <person name="Faulkner L."/>
            <person name="Fleming C.J."/>
            <person name="Frankish A."/>
            <person name="Frankland J.A."/>
            <person name="French L."/>
            <person name="Fricker D.G."/>
            <person name="Garner P."/>
            <person name="Garnett J."/>
            <person name="Ghori J."/>
            <person name="Gilbert J.G.R."/>
            <person name="Glison C."/>
            <person name="Grafham D.V."/>
            <person name="Gribble S."/>
            <person name="Griffiths C."/>
            <person name="Griffiths-Jones S."/>
            <person name="Grocock R."/>
            <person name="Guy J."/>
            <person name="Hall R.E."/>
            <person name="Hammond S."/>
            <person name="Harley J.L."/>
            <person name="Harrison E.S.I."/>
            <person name="Hart E.A."/>
            <person name="Heath P.D."/>
            <person name="Henderson C.D."/>
            <person name="Hopkins B.L."/>
            <person name="Howard P.J."/>
            <person name="Howden P.J."/>
            <person name="Huckle E."/>
            <person name="Johnson C."/>
            <person name="Johnson D."/>
            <person name="Joy A.A."/>
            <person name="Kay M."/>
            <person name="Keenan S."/>
            <person name="Kershaw J.K."/>
            <person name="Kimberley A.M."/>
            <person name="King A."/>
            <person name="Knights A."/>
            <person name="Laird G.K."/>
            <person name="Langford C."/>
            <person name="Lawlor S."/>
            <person name="Leongamornlert D.A."/>
            <person name="Leversha M."/>
            <person name="Lloyd C."/>
            <person name="Lloyd D.M."/>
            <person name="Lovell J."/>
            <person name="Martin S."/>
            <person name="Mashreghi-Mohammadi M."/>
            <person name="Matthews L."/>
            <person name="McLaren S."/>
            <person name="McLay K.E."/>
            <person name="McMurray A."/>
            <person name="Milne S."/>
            <person name="Nickerson T."/>
            <person name="Nisbett J."/>
            <person name="Nordsiek G."/>
            <person name="Pearce A.V."/>
            <person name="Peck A.I."/>
            <person name="Porter K.M."/>
            <person name="Pandian R."/>
            <person name="Pelan S."/>
            <person name="Phillimore B."/>
            <person name="Povey S."/>
            <person name="Ramsey Y."/>
            <person name="Rand V."/>
            <person name="Scharfe M."/>
            <person name="Sehra H.K."/>
            <person name="Shownkeen R."/>
            <person name="Sims S.K."/>
            <person name="Skuce C.D."/>
            <person name="Smith M."/>
            <person name="Steward C.A."/>
            <person name="Swarbreck D."/>
            <person name="Sycamore N."/>
            <person name="Tester J."/>
            <person name="Thorpe A."/>
            <person name="Tracey A."/>
            <person name="Tromans A."/>
            <person name="Thomas D.W."/>
            <person name="Wall M."/>
            <person name="Wallis J.M."/>
            <person name="West A.P."/>
            <person name="Whitehead S.L."/>
            <person name="Willey D.L."/>
            <person name="Williams S.A."/>
            <person name="Wilming L."/>
            <person name="Wray P.W."/>
            <person name="Young L."/>
            <person name="Ashurst J.L."/>
            <person name="Coulson A."/>
            <person name="Blocker H."/>
            <person name="Durbin R.M."/>
            <person name="Sulston J.E."/>
            <person name="Hubbard T."/>
            <person name="Jackson M.J."/>
            <person name="Bentley D.R."/>
            <person name="Beck S."/>
            <person name="Rogers J."/>
            <person name="Dunham I."/>
        </authorList>
    </citation>
    <scope>NUCLEOTIDE SEQUENCE [LARGE SCALE GENOMIC DNA]</scope>
</reference>
<reference key="5">
    <citation type="submission" date="2005-07" db="EMBL/GenBank/DDBJ databases">
        <authorList>
            <person name="Mural R.J."/>
            <person name="Istrail S."/>
            <person name="Sutton G."/>
            <person name="Florea L."/>
            <person name="Halpern A.L."/>
            <person name="Mobarry C.M."/>
            <person name="Lippert R."/>
            <person name="Walenz B."/>
            <person name="Shatkay H."/>
            <person name="Dew I."/>
            <person name="Miller J.R."/>
            <person name="Flanigan M.J."/>
            <person name="Edwards N.J."/>
            <person name="Bolanos R."/>
            <person name="Fasulo D."/>
            <person name="Halldorsson B.V."/>
            <person name="Hannenhalli S."/>
            <person name="Turner R."/>
            <person name="Yooseph S."/>
            <person name="Lu F."/>
            <person name="Nusskern D.R."/>
            <person name="Shue B.C."/>
            <person name="Zheng X.H."/>
            <person name="Zhong F."/>
            <person name="Delcher A.L."/>
            <person name="Huson D.H."/>
            <person name="Kravitz S.A."/>
            <person name="Mouchard L."/>
            <person name="Reinert K."/>
            <person name="Remington K.A."/>
            <person name="Clark A.G."/>
            <person name="Waterman M.S."/>
            <person name="Eichler E.E."/>
            <person name="Adams M.D."/>
            <person name="Hunkapiller M.W."/>
            <person name="Myers E.W."/>
            <person name="Venter J.C."/>
        </authorList>
    </citation>
    <scope>NUCLEOTIDE SEQUENCE [LARGE SCALE GENOMIC DNA]</scope>
</reference>
<reference key="6">
    <citation type="journal article" date="2004" name="Genome Res.">
        <title>The status, quality, and expansion of the NIH full-length cDNA project: the Mammalian Gene Collection (MGC).</title>
        <authorList>
            <consortium name="The MGC Project Team"/>
        </authorList>
    </citation>
    <scope>NUCLEOTIDE SEQUENCE [LARGE SCALE MRNA]</scope>
    <source>
        <tissue>Muscle</tissue>
    </source>
</reference>
<reference key="7">
    <citation type="journal article" date="2006" name="Biol. Chem.">
        <title>The zinc finger protein ZNF297B interacts with BDP1, a subunit of TFIIIB.</title>
        <authorList>
            <person name="Schoenen F."/>
            <person name="Wirth B."/>
        </authorList>
    </citation>
    <scope>INTERACTION WITH BDP1</scope>
</reference>
<reference key="8">
    <citation type="journal article" date="2012" name="Proc. Natl. Acad. Sci. U.S.A.">
        <title>N-terminal acetylome analyses and functional insights of the N-terminal acetyltransferase NatB.</title>
        <authorList>
            <person name="Van Damme P."/>
            <person name="Lasa M."/>
            <person name="Polevoda B."/>
            <person name="Gazquez C."/>
            <person name="Elosegui-Artola A."/>
            <person name="Kim D.S."/>
            <person name="De Juan-Pardo E."/>
            <person name="Demeyer K."/>
            <person name="Hole K."/>
            <person name="Larrea E."/>
            <person name="Timmerman E."/>
            <person name="Prieto J."/>
            <person name="Arnesen T."/>
            <person name="Sherman F."/>
            <person name="Gevaert K."/>
            <person name="Aldabe R."/>
        </authorList>
    </citation>
    <scope>ACETYLATION [LARGE SCALE ANALYSIS] AT MET-1</scope>
    <scope>IDENTIFICATION BY MASS SPECTROMETRY [LARGE SCALE ANALYSIS]</scope>
</reference>
<reference key="9">
    <citation type="journal article" date="2013" name="J. Proteome Res.">
        <title>Toward a comprehensive characterization of a human cancer cell phosphoproteome.</title>
        <authorList>
            <person name="Zhou H."/>
            <person name="Di Palma S."/>
            <person name="Preisinger C."/>
            <person name="Peng M."/>
            <person name="Polat A.N."/>
            <person name="Heck A.J."/>
            <person name="Mohammed S."/>
        </authorList>
    </citation>
    <scope>PHOSPHORYLATION [LARGE SCALE ANALYSIS] AT THR-423</scope>
    <scope>IDENTIFICATION BY MASS SPECTROMETRY [LARGE SCALE ANALYSIS]</scope>
    <source>
        <tissue>Erythroleukemia</tissue>
    </source>
</reference>
<reference key="10">
    <citation type="journal article" date="2014" name="Nat. Struct. Mol. Biol.">
        <title>Uncovering global SUMOylation signaling networks in a site-specific manner.</title>
        <authorList>
            <person name="Hendriks I.A."/>
            <person name="D'Souza R.C."/>
            <person name="Yang B."/>
            <person name="Verlaan-de Vries M."/>
            <person name="Mann M."/>
            <person name="Vertegaal A.C."/>
        </authorList>
    </citation>
    <scope>SUMOYLATION [LARGE SCALE ANALYSIS] AT LYS-182; LYS-247 AND LYS-458</scope>
    <scope>IDENTIFICATION BY MASS SPECTROMETRY [LARGE SCALE ANALYSIS]</scope>
</reference>
<reference key="11">
    <citation type="journal article" date="2015" name="Mol. Cell. Proteomics">
        <title>System-wide analysis of SUMOylation dynamics in response to replication stress reveals novel small ubiquitin-like modified target proteins and acceptor lysines relevant for genome stability.</title>
        <authorList>
            <person name="Xiao Z."/>
            <person name="Chang J.G."/>
            <person name="Hendriks I.A."/>
            <person name="Sigurdsson J.O."/>
            <person name="Olsen J.V."/>
            <person name="Vertegaal A.C."/>
        </authorList>
    </citation>
    <scope>SUMOYLATION [LARGE SCALE ANALYSIS] AT LYS-247 AND LYS-458</scope>
    <scope>IDENTIFICATION BY MASS SPECTROMETRY [LARGE SCALE ANALYSIS]</scope>
</reference>
<reference key="12">
    <citation type="journal article" date="2017" name="Nat. Struct. Mol. Biol.">
        <title>Site-specific mapping of the human SUMO proteome reveals co-modification with phosphorylation.</title>
        <authorList>
            <person name="Hendriks I.A."/>
            <person name="Lyon D."/>
            <person name="Young C."/>
            <person name="Jensen L.J."/>
            <person name="Vertegaal A.C."/>
            <person name="Nielsen M.L."/>
        </authorList>
    </citation>
    <scope>SUMOYLATION [LARGE SCALE ANALYSIS] AT LYS-182; LYS-241; LYS-247; LYS-297; LYS-358 AND LYS-458</scope>
    <scope>IDENTIFICATION BY MASS SPECTROMETRY [LARGE SCALE ANALYSIS]</scope>
</reference>
<reference key="13">
    <citation type="submission" date="2005-11" db="PDB data bank">
        <title>Solution structure of tandem repeat of the ZF-C2H2 domains of human zinc finger protein 297B.</title>
        <authorList>
            <consortium name="RIKEN structural genomics initiative (RSGI)"/>
        </authorList>
    </citation>
    <scope>STRUCTURE BY NMR OF 370-466</scope>
</reference>
<comment type="function">
    <text>May be involved in transcriptional regulation.</text>
</comment>
<comment type="subunit">
    <text evidence="4">Interacts with BDP1.</text>
</comment>
<comment type="interaction">
    <interactant intactId="EBI-740718">
        <id>O43298</id>
    </interactant>
    <interactant intactId="EBI-8637627">
        <id>Q8WTP8</id>
        <label>AEN</label>
    </interactant>
    <organismsDiffer>false</organismsDiffer>
    <experiments>3</experiments>
</comment>
<comment type="interaction">
    <interactant intactId="EBI-740718">
        <id>O43298</id>
    </interactant>
    <interactant intactId="EBI-541426">
        <id>Q9BXS5</id>
        <label>AP1M1</label>
    </interactant>
    <organismsDiffer>false</organismsDiffer>
    <experiments>6</experiments>
</comment>
<comment type="interaction">
    <interactant intactId="EBI-740718">
        <id>O43298</id>
    </interactant>
    <interactant intactId="EBI-718116">
        <id>P36575</id>
        <label>ARR3</label>
    </interactant>
    <organismsDiffer>false</organismsDiffer>
    <experiments>3</experiments>
</comment>
<comment type="interaction">
    <interactant intactId="EBI-740718">
        <id>O43298</id>
    </interactant>
    <interactant intactId="EBI-743313">
        <id>P49407</id>
        <label>ARRB1</label>
    </interactant>
    <organismsDiffer>false</organismsDiffer>
    <experiments>5</experiments>
</comment>
<comment type="interaction">
    <interactant intactId="EBI-740718">
        <id>O43298</id>
    </interactant>
    <interactant intactId="EBI-930964">
        <id>P54253</id>
        <label>ATXN1</label>
    </interactant>
    <organismsDiffer>false</organismsDiffer>
    <experiments>7</experiments>
</comment>
<comment type="interaction">
    <interactant intactId="EBI-740718">
        <id>O43298</id>
    </interactant>
    <interactant intactId="EBI-10961312">
        <id>Q8IYE1</id>
        <label>CCDC13</label>
    </interactant>
    <organismsDiffer>false</organismsDiffer>
    <experiments>3</experiments>
</comment>
<comment type="interaction">
    <interactant intactId="EBI-740718">
        <id>O43298</id>
    </interactant>
    <interactant intactId="EBI-3919850">
        <id>Q8IVW4</id>
        <label>CDKL3</label>
    </interactant>
    <organismsDiffer>false</organismsDiffer>
    <experiments>3</experiments>
</comment>
<comment type="interaction">
    <interactant intactId="EBI-740718">
        <id>O43298</id>
    </interactant>
    <interactant intactId="EBI-10292696">
        <id>Q96Q77</id>
        <label>CIB3</label>
    </interactant>
    <organismsDiffer>false</organismsDiffer>
    <experiments>3</experiments>
</comment>
<comment type="interaction">
    <interactant intactId="EBI-740718">
        <id>O43298</id>
    </interactant>
    <interactant intactId="EBI-351257">
        <id>P26196</id>
        <label>DDX6</label>
    </interactant>
    <organismsDiffer>false</organismsDiffer>
    <experiments>3</experiments>
</comment>
<comment type="interaction">
    <interactant intactId="EBI-740718">
        <id>O43298</id>
    </interactant>
    <interactant intactId="EBI-10233719">
        <id>Q14689-6</id>
        <label>DIP2A</label>
    </interactant>
    <organismsDiffer>false</organismsDiffer>
    <experiments>3</experiments>
</comment>
<comment type="interaction">
    <interactant intactId="EBI-740718">
        <id>O43298</id>
    </interactant>
    <interactant intactId="EBI-719941">
        <id>Q3B820</id>
        <label>FAM161A</label>
    </interactant>
    <organismsDiffer>false</organismsDiffer>
    <experiments>3</experiments>
</comment>
<comment type="interaction">
    <interactant intactId="EBI-740718">
        <id>O43298</id>
    </interactant>
    <interactant intactId="EBI-8639312">
        <id>P25800</id>
        <label>LMO1</label>
    </interactant>
    <organismsDiffer>false</organismsDiffer>
    <experiments>8</experiments>
</comment>
<comment type="interaction">
    <interactant intactId="EBI-740718">
        <id>O43298</id>
    </interactant>
    <interactant intactId="EBI-11742507">
        <id>Q8TAP4-4</id>
        <label>LMO3</label>
    </interactant>
    <organismsDiffer>false</organismsDiffer>
    <experiments>3</experiments>
</comment>
<comment type="interaction">
    <interactant intactId="EBI-740718">
        <id>O43298</id>
    </interactant>
    <interactant intactId="EBI-2798728">
        <id>P61968</id>
        <label>LMO4</label>
    </interactant>
    <organismsDiffer>false</organismsDiffer>
    <experiments>3</experiments>
</comment>
<comment type="interaction">
    <interactant intactId="EBI-740718">
        <id>O43298</id>
    </interactant>
    <interactant intactId="EBI-739832">
        <id>Q8TBB1</id>
        <label>LNX1</label>
    </interactant>
    <organismsDiffer>false</organismsDiffer>
    <experiments>5</experiments>
</comment>
<comment type="interaction">
    <interactant intactId="EBI-740718">
        <id>O43298</id>
    </interactant>
    <interactant intactId="EBI-10288852">
        <id>Q9UBU8-2</id>
        <label>MORF4L1</label>
    </interactant>
    <organismsDiffer>false</organismsDiffer>
    <experiments>3</experiments>
</comment>
<comment type="interaction">
    <interactant intactId="EBI-740718">
        <id>O43298</id>
    </interactant>
    <interactant intactId="EBI-399257">
        <id>Q15014</id>
        <label>MORF4L2</label>
    </interactant>
    <organismsDiffer>false</organismsDiffer>
    <experiments>4</experiments>
</comment>
<comment type="interaction">
    <interactant intactId="EBI-740718">
        <id>O43298</id>
    </interactant>
    <interactant intactId="EBI-357622">
        <id>O43242</id>
        <label>PSMD3</label>
    </interactant>
    <organismsDiffer>false</organismsDiffer>
    <experiments>7</experiments>
</comment>
<comment type="interaction">
    <interactant intactId="EBI-740718">
        <id>O43298</id>
    </interactant>
    <interactant intactId="EBI-10246152">
        <id>Q5T7P8-2</id>
        <label>SYT6</label>
    </interactant>
    <organismsDiffer>false</organismsDiffer>
    <experiments>6</experiments>
</comment>
<comment type="interaction">
    <interactant intactId="EBI-740718">
        <id>O43298</id>
    </interactant>
    <interactant intactId="EBI-710310">
        <id>Q15560</id>
        <label>TCEA2</label>
    </interactant>
    <organismsDiffer>false</organismsDiffer>
    <experiments>3</experiments>
</comment>
<comment type="interaction">
    <interactant intactId="EBI-740718">
        <id>O43298</id>
    </interactant>
    <interactant intactId="EBI-744471">
        <id>O43167</id>
        <label>ZBTB24</label>
    </interactant>
    <organismsDiffer>false</organismsDiffer>
    <experiments>3</experiments>
</comment>
<comment type="interaction">
    <interactant intactId="EBI-740718">
        <id>O43298</id>
    </interactant>
    <interactant intactId="EBI-10177272">
        <id>P15622-3</id>
        <label>ZNF250</label>
    </interactant>
    <organismsDiffer>false</organismsDiffer>
    <experiments>3</experiments>
</comment>
<comment type="interaction">
    <interactant intactId="EBI-740718">
        <id>O43298</id>
    </interactant>
    <interactant intactId="EBI-740727">
        <id>Q8TAU3</id>
        <label>ZNF417</label>
    </interactant>
    <organismsDiffer>false</organismsDiffer>
    <experiments>4</experiments>
</comment>
<comment type="interaction">
    <interactant intactId="EBI-740718">
        <id>O43298</id>
    </interactant>
    <interactant intactId="EBI-6427977">
        <id>Q96SQ5</id>
        <label>ZNF587</label>
    </interactant>
    <organismsDiffer>false</organismsDiffer>
    <experiments>3</experiments>
</comment>
<comment type="subcellular location">
    <subcellularLocation>
        <location evidence="5">Nucleus</location>
    </subcellularLocation>
</comment>
<comment type="similarity">
    <text evidence="5">Belongs to the krueppel C2H2-type zinc-finger protein family.</text>
</comment>
<comment type="sequence caution" evidence="5">
    <conflict type="erroneous initiation">
        <sequence resource="EMBL-CDS" id="BAA24844"/>
    </conflict>
</comment>
<feature type="chain" id="PRO_0000047519" description="Zinc finger and BTB domain-containing protein 43">
    <location>
        <begin position="1"/>
        <end position="467"/>
    </location>
</feature>
<feature type="domain" description="BTB" evidence="1">
    <location>
        <begin position="33"/>
        <end position="97"/>
    </location>
</feature>
<feature type="zinc finger region" description="C2H2-type 1; atypical" evidence="2">
    <location>
        <begin position="373"/>
        <end position="394"/>
    </location>
</feature>
<feature type="zinc finger region" description="C2H2-type 2" evidence="2">
    <location>
        <begin position="400"/>
        <end position="422"/>
    </location>
</feature>
<feature type="zinc finger region" description="C2H2-type 3; atypical" evidence="2">
    <location>
        <begin position="428"/>
        <end position="450"/>
    </location>
</feature>
<feature type="region of interest" description="Disordered" evidence="3">
    <location>
        <begin position="134"/>
        <end position="153"/>
    </location>
</feature>
<feature type="region of interest" description="Disordered" evidence="3">
    <location>
        <begin position="162"/>
        <end position="225"/>
    </location>
</feature>
<feature type="compositionally biased region" description="Basic and acidic residues" evidence="3">
    <location>
        <begin position="164"/>
        <end position="174"/>
    </location>
</feature>
<feature type="compositionally biased region" description="Basic and acidic residues" evidence="3">
    <location>
        <begin position="182"/>
        <end position="194"/>
    </location>
</feature>
<feature type="modified residue" description="N-acetylmethionine" evidence="6">
    <location>
        <position position="1"/>
    </location>
</feature>
<feature type="modified residue" description="Phosphothreonine" evidence="7">
    <location>
        <position position="423"/>
    </location>
</feature>
<feature type="cross-link" description="Glycyl lysine isopeptide (Lys-Gly) (interchain with G-Cter in SUMO2)" evidence="8 10">
    <location>
        <position position="182"/>
    </location>
</feature>
<feature type="cross-link" description="Glycyl lysine isopeptide (Lys-Gly) (interchain with G-Cter in SUMO2)" evidence="10">
    <location>
        <position position="241"/>
    </location>
</feature>
<feature type="cross-link" description="Glycyl lysine isopeptide (Lys-Gly) (interchain with G-Cter in SUMO2)" evidence="8 9 10">
    <location>
        <position position="247"/>
    </location>
</feature>
<feature type="cross-link" description="Glycyl lysine isopeptide (Lys-Gly) (interchain with G-Cter in SUMO2)" evidence="10">
    <location>
        <position position="297"/>
    </location>
</feature>
<feature type="cross-link" description="Glycyl lysine isopeptide (Lys-Gly) (interchain with G-Cter in SUMO2)" evidence="10">
    <location>
        <position position="358"/>
    </location>
</feature>
<feature type="cross-link" description="Glycyl lysine isopeptide (Lys-Gly) (interchain with G-Cter in SUMO2)" evidence="8 9 10">
    <location>
        <position position="458"/>
    </location>
</feature>
<feature type="strand" evidence="12">
    <location>
        <begin position="381"/>
        <end position="383"/>
    </location>
</feature>
<feature type="helix" evidence="12">
    <location>
        <begin position="384"/>
        <end position="395"/>
    </location>
</feature>
<feature type="strand" evidence="11">
    <location>
        <begin position="399"/>
        <end position="401"/>
    </location>
</feature>
<feature type="strand" evidence="12">
    <location>
        <begin position="403"/>
        <end position="405"/>
    </location>
</feature>
<feature type="strand" evidence="12">
    <location>
        <begin position="408"/>
        <end position="411"/>
    </location>
</feature>
<feature type="helix" evidence="12">
    <location>
        <begin position="412"/>
        <end position="423"/>
    </location>
</feature>
<feature type="turn" evidence="12">
    <location>
        <begin position="431"/>
        <end position="433"/>
    </location>
</feature>
<feature type="strand" evidence="11">
    <location>
        <begin position="436"/>
        <end position="438"/>
    </location>
</feature>
<feature type="helix" evidence="12">
    <location>
        <begin position="440"/>
        <end position="449"/>
    </location>
</feature>
<evidence type="ECO:0000255" key="1">
    <source>
        <dbReference type="PROSITE-ProRule" id="PRU00037"/>
    </source>
</evidence>
<evidence type="ECO:0000255" key="2">
    <source>
        <dbReference type="PROSITE-ProRule" id="PRU00042"/>
    </source>
</evidence>
<evidence type="ECO:0000256" key="3">
    <source>
        <dbReference type="SAM" id="MobiDB-lite"/>
    </source>
</evidence>
<evidence type="ECO:0000269" key="4">
    <source>
    </source>
</evidence>
<evidence type="ECO:0000305" key="5"/>
<evidence type="ECO:0007744" key="6">
    <source>
    </source>
</evidence>
<evidence type="ECO:0007744" key="7">
    <source>
    </source>
</evidence>
<evidence type="ECO:0007744" key="8">
    <source>
    </source>
</evidence>
<evidence type="ECO:0007744" key="9">
    <source>
    </source>
</evidence>
<evidence type="ECO:0007744" key="10">
    <source>
    </source>
</evidence>
<evidence type="ECO:0007829" key="11">
    <source>
        <dbReference type="PDB" id="2CSH"/>
    </source>
</evidence>
<evidence type="ECO:0007829" key="12">
    <source>
        <dbReference type="PDB" id="8YMZ"/>
    </source>
</evidence>
<dbReference type="EMBL" id="AB007874">
    <property type="protein sequence ID" value="BAA24844.2"/>
    <property type="status" value="ALT_INIT"/>
    <property type="molecule type" value="mRNA"/>
</dbReference>
<dbReference type="EMBL" id="AF049907">
    <property type="protein sequence ID" value="AAC05500.1"/>
    <property type="molecule type" value="mRNA"/>
</dbReference>
<dbReference type="EMBL" id="BT007194">
    <property type="protein sequence ID" value="AAP35858.1"/>
    <property type="molecule type" value="mRNA"/>
</dbReference>
<dbReference type="EMBL" id="AL161731">
    <property type="status" value="NOT_ANNOTATED_CDS"/>
    <property type="molecule type" value="Genomic_DNA"/>
</dbReference>
<dbReference type="EMBL" id="CH471090">
    <property type="protein sequence ID" value="EAW87643.1"/>
    <property type="molecule type" value="Genomic_DNA"/>
</dbReference>
<dbReference type="EMBL" id="BC008828">
    <property type="protein sequence ID" value="AAH08828.1"/>
    <property type="molecule type" value="mRNA"/>
</dbReference>
<dbReference type="CCDS" id="CCDS6867.1"/>
<dbReference type="RefSeq" id="NP_001129248.1">
    <property type="nucleotide sequence ID" value="NM_001135776.2"/>
</dbReference>
<dbReference type="RefSeq" id="NP_054726.1">
    <property type="nucleotide sequence ID" value="NM_014007.4"/>
</dbReference>
<dbReference type="RefSeq" id="XP_005251892.1">
    <property type="nucleotide sequence ID" value="XM_005251835.4"/>
</dbReference>
<dbReference type="RefSeq" id="XP_011516711.1">
    <property type="nucleotide sequence ID" value="XM_011518409.1"/>
</dbReference>
<dbReference type="RefSeq" id="XP_011516713.1">
    <property type="nucleotide sequence ID" value="XM_011518411.3"/>
</dbReference>
<dbReference type="RefSeq" id="XP_047278987.1">
    <property type="nucleotide sequence ID" value="XM_047423031.1"/>
</dbReference>
<dbReference type="RefSeq" id="XP_047278988.1">
    <property type="nucleotide sequence ID" value="XM_047423032.1"/>
</dbReference>
<dbReference type="RefSeq" id="XP_054218421.1">
    <property type="nucleotide sequence ID" value="XM_054362446.1"/>
</dbReference>
<dbReference type="RefSeq" id="XP_054218422.1">
    <property type="nucleotide sequence ID" value="XM_054362447.1"/>
</dbReference>
<dbReference type="RefSeq" id="XP_054218423.1">
    <property type="nucleotide sequence ID" value="XM_054362448.1"/>
</dbReference>
<dbReference type="RefSeq" id="XP_054218424.1">
    <property type="nucleotide sequence ID" value="XM_054362449.1"/>
</dbReference>
<dbReference type="RefSeq" id="XP_054218425.1">
    <property type="nucleotide sequence ID" value="XM_054362450.1"/>
</dbReference>
<dbReference type="PDB" id="2CSH">
    <property type="method" value="NMR"/>
    <property type="chains" value="A=370-466"/>
</dbReference>
<dbReference type="PDB" id="8YMZ">
    <property type="method" value="X-ray"/>
    <property type="resolution" value="2.95 A"/>
    <property type="chains" value="E/F=372-453"/>
</dbReference>
<dbReference type="PDBsum" id="2CSH"/>
<dbReference type="PDBsum" id="8YMZ"/>
<dbReference type="SMR" id="O43298"/>
<dbReference type="BioGRID" id="116727">
    <property type="interactions" value="53"/>
</dbReference>
<dbReference type="FunCoup" id="O43298">
    <property type="interactions" value="614"/>
</dbReference>
<dbReference type="IntAct" id="O43298">
    <property type="interactions" value="36"/>
</dbReference>
<dbReference type="MINT" id="O43298"/>
<dbReference type="STRING" id="9606.ENSP00000362563"/>
<dbReference type="ChEMBL" id="CHEMBL5069369"/>
<dbReference type="iPTMnet" id="O43298"/>
<dbReference type="PhosphoSitePlus" id="O43298"/>
<dbReference type="SwissPalm" id="O43298"/>
<dbReference type="BioMuta" id="ZBTB43"/>
<dbReference type="jPOST" id="O43298"/>
<dbReference type="MassIVE" id="O43298"/>
<dbReference type="PaxDb" id="9606-ENSP00000362563"/>
<dbReference type="PeptideAtlas" id="O43298"/>
<dbReference type="ProteomicsDB" id="48871"/>
<dbReference type="Pumba" id="O43298"/>
<dbReference type="Antibodypedia" id="16550">
    <property type="antibodies" value="130 antibodies from 17 providers"/>
</dbReference>
<dbReference type="DNASU" id="23099"/>
<dbReference type="Ensembl" id="ENST00000373457.1">
    <property type="protein sequence ID" value="ENSP00000362556.1"/>
    <property type="gene ID" value="ENSG00000169155.10"/>
</dbReference>
<dbReference type="Ensembl" id="ENST00000373464.5">
    <property type="protein sequence ID" value="ENSP00000362563.4"/>
    <property type="gene ID" value="ENSG00000169155.10"/>
</dbReference>
<dbReference type="Ensembl" id="ENST00000449886.5">
    <property type="protein sequence ID" value="ENSP00000390344.1"/>
    <property type="gene ID" value="ENSG00000169155.10"/>
</dbReference>
<dbReference type="GeneID" id="23099"/>
<dbReference type="KEGG" id="hsa:23099"/>
<dbReference type="MANE-Select" id="ENST00000373464.5">
    <property type="protein sequence ID" value="ENSP00000362563.4"/>
    <property type="RefSeq nucleotide sequence ID" value="NM_014007.4"/>
    <property type="RefSeq protein sequence ID" value="NP_054726.1"/>
</dbReference>
<dbReference type="UCSC" id="uc004bql.4">
    <property type="organism name" value="human"/>
</dbReference>
<dbReference type="AGR" id="HGNC:17908"/>
<dbReference type="CTD" id="23099"/>
<dbReference type="GeneCards" id="ZBTB43"/>
<dbReference type="HGNC" id="HGNC:17908">
    <property type="gene designation" value="ZBTB43"/>
</dbReference>
<dbReference type="HPA" id="ENSG00000169155">
    <property type="expression patterns" value="Tissue enhanced (bone)"/>
</dbReference>
<dbReference type="MIM" id="618676">
    <property type="type" value="gene"/>
</dbReference>
<dbReference type="neXtProt" id="NX_O43298"/>
<dbReference type="OpenTargets" id="ENSG00000169155"/>
<dbReference type="PharmGKB" id="PA38257"/>
<dbReference type="VEuPathDB" id="HostDB:ENSG00000169155"/>
<dbReference type="eggNOG" id="KOG1721">
    <property type="taxonomic scope" value="Eukaryota"/>
</dbReference>
<dbReference type="GeneTree" id="ENSGT00940000160616"/>
<dbReference type="HOGENOM" id="CLU_029118_2_0_1"/>
<dbReference type="InParanoid" id="O43298"/>
<dbReference type="OMA" id="IEMVAGI"/>
<dbReference type="OrthoDB" id="8117402at2759"/>
<dbReference type="PAN-GO" id="O43298">
    <property type="GO annotations" value="3 GO annotations based on evolutionary models"/>
</dbReference>
<dbReference type="PhylomeDB" id="O43298"/>
<dbReference type="TreeFam" id="TF333162"/>
<dbReference type="PathwayCommons" id="O43298"/>
<dbReference type="SignaLink" id="O43298"/>
<dbReference type="SIGNOR" id="O43298"/>
<dbReference type="BioGRID-ORCS" id="23099">
    <property type="hits" value="12 hits in 1216 CRISPR screens"/>
</dbReference>
<dbReference type="ChiTaRS" id="ZBTB43">
    <property type="organism name" value="human"/>
</dbReference>
<dbReference type="EvolutionaryTrace" id="O43298"/>
<dbReference type="GenomeRNAi" id="23099"/>
<dbReference type="Pharos" id="O43298">
    <property type="development level" value="Tdark"/>
</dbReference>
<dbReference type="PRO" id="PR:O43298"/>
<dbReference type="Proteomes" id="UP000005640">
    <property type="component" value="Chromosome 9"/>
</dbReference>
<dbReference type="RNAct" id="O43298">
    <property type="molecule type" value="protein"/>
</dbReference>
<dbReference type="Bgee" id="ENSG00000169155">
    <property type="expression patterns" value="Expressed in buccal mucosa cell and 202 other cell types or tissues"/>
</dbReference>
<dbReference type="ExpressionAtlas" id="O43298">
    <property type="expression patterns" value="baseline and differential"/>
</dbReference>
<dbReference type="GO" id="GO:0000785">
    <property type="term" value="C:chromatin"/>
    <property type="evidence" value="ECO:0000247"/>
    <property type="project" value="NTNU_SB"/>
</dbReference>
<dbReference type="GO" id="GO:0005634">
    <property type="term" value="C:nucleus"/>
    <property type="evidence" value="ECO:0007669"/>
    <property type="project" value="UniProtKB-SubCell"/>
</dbReference>
<dbReference type="GO" id="GO:0000981">
    <property type="term" value="F:DNA-binding transcription factor activity, RNA polymerase II-specific"/>
    <property type="evidence" value="ECO:0000247"/>
    <property type="project" value="NTNU_SB"/>
</dbReference>
<dbReference type="GO" id="GO:0000978">
    <property type="term" value="F:RNA polymerase II cis-regulatory region sequence-specific DNA binding"/>
    <property type="evidence" value="ECO:0000318"/>
    <property type="project" value="GO_Central"/>
</dbReference>
<dbReference type="GO" id="GO:0001025">
    <property type="term" value="F:RNA polymerase III general transcription initiation factor binding"/>
    <property type="evidence" value="ECO:0000353"/>
    <property type="project" value="ARUK-UCL"/>
</dbReference>
<dbReference type="GO" id="GO:1990837">
    <property type="term" value="F:sequence-specific double-stranded DNA binding"/>
    <property type="evidence" value="ECO:0000314"/>
    <property type="project" value="ARUK-UCL"/>
</dbReference>
<dbReference type="GO" id="GO:0008270">
    <property type="term" value="F:zinc ion binding"/>
    <property type="evidence" value="ECO:0007669"/>
    <property type="project" value="UniProtKB-KW"/>
</dbReference>
<dbReference type="GO" id="GO:0006357">
    <property type="term" value="P:regulation of transcription by RNA polymerase II"/>
    <property type="evidence" value="ECO:0000318"/>
    <property type="project" value="GO_Central"/>
</dbReference>
<dbReference type="CDD" id="cd18227">
    <property type="entry name" value="BTB_POZ_ZBTB43"/>
    <property type="match status" value="1"/>
</dbReference>
<dbReference type="FunFam" id="3.30.710.10:FF:000009">
    <property type="entry name" value="Zinc finger and BTB domain-containing 37"/>
    <property type="match status" value="1"/>
</dbReference>
<dbReference type="FunFam" id="3.30.160.60:FF:000808">
    <property type="entry name" value="Zinc finger and BTB domain-containing protein 43"/>
    <property type="match status" value="1"/>
</dbReference>
<dbReference type="Gene3D" id="3.30.160.60">
    <property type="entry name" value="Classic Zinc Finger"/>
    <property type="match status" value="1"/>
</dbReference>
<dbReference type="Gene3D" id="3.30.710.10">
    <property type="entry name" value="Potassium Channel Kv1.1, Chain A"/>
    <property type="match status" value="1"/>
</dbReference>
<dbReference type="InterPro" id="IPR000210">
    <property type="entry name" value="BTB/POZ_dom"/>
</dbReference>
<dbReference type="InterPro" id="IPR011333">
    <property type="entry name" value="SKP1/BTB/POZ_sf"/>
</dbReference>
<dbReference type="InterPro" id="IPR036236">
    <property type="entry name" value="Znf_C2H2_sf"/>
</dbReference>
<dbReference type="InterPro" id="IPR013087">
    <property type="entry name" value="Znf_C2H2_type"/>
</dbReference>
<dbReference type="InterPro" id="IPR050457">
    <property type="entry name" value="ZnFinger_BTB_dom_contain"/>
</dbReference>
<dbReference type="PANTHER" id="PTHR46105">
    <property type="entry name" value="AGAP004733-PA"/>
    <property type="match status" value="1"/>
</dbReference>
<dbReference type="PANTHER" id="PTHR46105:SF15">
    <property type="entry name" value="ZINC FINGER AND BTB DOMAIN-CONTAINING PROTEIN 43"/>
    <property type="match status" value="1"/>
</dbReference>
<dbReference type="Pfam" id="PF00651">
    <property type="entry name" value="BTB"/>
    <property type="match status" value="1"/>
</dbReference>
<dbReference type="Pfam" id="PF00096">
    <property type="entry name" value="zf-C2H2"/>
    <property type="match status" value="1"/>
</dbReference>
<dbReference type="SMART" id="SM00225">
    <property type="entry name" value="BTB"/>
    <property type="match status" value="1"/>
</dbReference>
<dbReference type="SMART" id="SM00355">
    <property type="entry name" value="ZnF_C2H2"/>
    <property type="match status" value="3"/>
</dbReference>
<dbReference type="SUPFAM" id="SSF57667">
    <property type="entry name" value="beta-beta-alpha zinc fingers"/>
    <property type="match status" value="2"/>
</dbReference>
<dbReference type="SUPFAM" id="SSF54695">
    <property type="entry name" value="POZ domain"/>
    <property type="match status" value="1"/>
</dbReference>
<dbReference type="PROSITE" id="PS50097">
    <property type="entry name" value="BTB"/>
    <property type="match status" value="1"/>
</dbReference>
<dbReference type="PROSITE" id="PS00028">
    <property type="entry name" value="ZINC_FINGER_C2H2_1"/>
    <property type="match status" value="1"/>
</dbReference>
<dbReference type="PROSITE" id="PS50157">
    <property type="entry name" value="ZINC_FINGER_C2H2_2"/>
    <property type="match status" value="3"/>
</dbReference>
<name>ZBT43_HUMAN</name>
<keyword id="KW-0002">3D-structure</keyword>
<keyword id="KW-0007">Acetylation</keyword>
<keyword id="KW-0238">DNA-binding</keyword>
<keyword id="KW-1017">Isopeptide bond</keyword>
<keyword id="KW-0479">Metal-binding</keyword>
<keyword id="KW-0539">Nucleus</keyword>
<keyword id="KW-0597">Phosphoprotein</keyword>
<keyword id="KW-1267">Proteomics identification</keyword>
<keyword id="KW-1185">Reference proteome</keyword>
<keyword id="KW-0677">Repeat</keyword>
<keyword id="KW-0804">Transcription</keyword>
<keyword id="KW-0805">Transcription regulation</keyword>
<keyword id="KW-0832">Ubl conjugation</keyword>
<keyword id="KW-0862">Zinc</keyword>
<keyword id="KW-0863">Zinc-finger</keyword>